<protein>
    <recommendedName>
        <fullName evidence="2">D-alanine--D-alanine ligase</fullName>
        <ecNumber evidence="2">6.3.2.4</ecNumber>
    </recommendedName>
    <alternativeName>
        <fullName evidence="2">D-Ala-D-Ala ligase</fullName>
    </alternativeName>
    <alternativeName>
        <fullName evidence="2">D-alanylalanine synthetase</fullName>
    </alternativeName>
</protein>
<name>DDL_CORA7</name>
<organism>
    <name type="scientific">Corynebacterium aurimucosum (strain ATCC 700975 / DSM 44827 / CIP 107346 / CN-1)</name>
    <name type="common">Corynebacterium nigricans</name>
    <dbReference type="NCBI Taxonomy" id="548476"/>
    <lineage>
        <taxon>Bacteria</taxon>
        <taxon>Bacillati</taxon>
        <taxon>Actinomycetota</taxon>
        <taxon>Actinomycetes</taxon>
        <taxon>Mycobacteriales</taxon>
        <taxon>Corynebacteriaceae</taxon>
        <taxon>Corynebacterium</taxon>
    </lineage>
</organism>
<gene>
    <name evidence="2" type="primary">ddl</name>
    <name type="ordered locus">cauri_1160</name>
</gene>
<sequence>MTEAKPVRVAVVYGGRSSEHSVSCISAGAIMEHLDPEKYEVVPIGITREGTWTQGNRAGLNIVDGRLPEVELHDELALSLNPATRGRIHNVTRHEHYTEVDVIVPVLHGPYGEDGTVQGLFELSGIPYVGAGVLASAVGMDKEFTKKLLVAEGLPVAPQEVLTGEATLDDLQKERLGLPVFVKPARGGSSIGVSKVSAWEDLEAALTLAYESDDKVLIEPEISGAEVEVGVLERPDGSLQASVPAKILGTTESEEGFYDFDAKYIDEGVSAAIPAPLSEELTAELRQRAIEAFRALGASGLSRVDFFVSDYSYCINEVNTFPGFTPISMYPQVFAAVGVGYAELLDTLIQTALARS</sequence>
<keyword id="KW-0067">ATP-binding</keyword>
<keyword id="KW-0133">Cell shape</keyword>
<keyword id="KW-0961">Cell wall biogenesis/degradation</keyword>
<keyword id="KW-0963">Cytoplasm</keyword>
<keyword id="KW-0436">Ligase</keyword>
<keyword id="KW-0460">Magnesium</keyword>
<keyword id="KW-0464">Manganese</keyword>
<keyword id="KW-0479">Metal-binding</keyword>
<keyword id="KW-0547">Nucleotide-binding</keyword>
<keyword id="KW-0573">Peptidoglycan synthesis</keyword>
<keyword id="KW-1185">Reference proteome</keyword>
<feature type="chain" id="PRO_1000189734" description="D-alanine--D-alanine ligase">
    <location>
        <begin position="1"/>
        <end position="356"/>
    </location>
</feature>
<feature type="domain" description="ATP-grasp" evidence="2">
    <location>
        <begin position="146"/>
        <end position="350"/>
    </location>
</feature>
<feature type="binding site" evidence="2">
    <location>
        <begin position="173"/>
        <end position="228"/>
    </location>
    <ligand>
        <name>ATP</name>
        <dbReference type="ChEBI" id="CHEBI:30616"/>
    </ligand>
</feature>
<feature type="binding site" evidence="2">
    <location>
        <position position="305"/>
    </location>
    <ligand>
        <name>Mg(2+)</name>
        <dbReference type="ChEBI" id="CHEBI:18420"/>
        <label>1</label>
    </ligand>
</feature>
<feature type="binding site" evidence="2">
    <location>
        <position position="317"/>
    </location>
    <ligand>
        <name>Mg(2+)</name>
        <dbReference type="ChEBI" id="CHEBI:18420"/>
        <label>1</label>
    </ligand>
</feature>
<feature type="binding site" evidence="2">
    <location>
        <position position="317"/>
    </location>
    <ligand>
        <name>Mg(2+)</name>
        <dbReference type="ChEBI" id="CHEBI:18420"/>
        <label>2</label>
    </ligand>
</feature>
<feature type="binding site" evidence="2">
    <location>
        <position position="319"/>
    </location>
    <ligand>
        <name>Mg(2+)</name>
        <dbReference type="ChEBI" id="CHEBI:18420"/>
        <label>2</label>
    </ligand>
</feature>
<reference key="1">
    <citation type="journal article" date="2010" name="BMC Genomics">
        <title>Complete genome sequence and lifestyle of black-pigmented Corynebacterium aurimucosum ATCC 700975 (formerly C. nigricans CN-1) isolated from a vaginal swab of a woman with spontaneous abortion.</title>
        <authorList>
            <person name="Trost E."/>
            <person name="Gotker S."/>
            <person name="Schneider J."/>
            <person name="Schneiker-Bekel S."/>
            <person name="Szczepanowski R."/>
            <person name="Tilker A."/>
            <person name="Viehoever P."/>
            <person name="Arnold W."/>
            <person name="Bekel T."/>
            <person name="Blom J."/>
            <person name="Gartemann K.H."/>
            <person name="Linke B."/>
            <person name="Goesmann A."/>
            <person name="Puhler A."/>
            <person name="Shukla S.K."/>
            <person name="Tauch A."/>
        </authorList>
    </citation>
    <scope>NUCLEOTIDE SEQUENCE [LARGE SCALE GENOMIC DNA]</scope>
    <source>
        <strain>ATCC 700975 / DSM 44827 / CIP 107346 / CN-1</strain>
    </source>
</reference>
<dbReference type="EC" id="6.3.2.4" evidence="2"/>
<dbReference type="EMBL" id="CP001601">
    <property type="protein sequence ID" value="ACP32753.1"/>
    <property type="molecule type" value="Genomic_DNA"/>
</dbReference>
<dbReference type="RefSeq" id="WP_010186850.1">
    <property type="nucleotide sequence ID" value="NC_012590.1"/>
</dbReference>
<dbReference type="SMR" id="C3PFZ9"/>
<dbReference type="STRING" id="548476.cauri_1160"/>
<dbReference type="GeneID" id="31923783"/>
<dbReference type="KEGG" id="car:cauri_1160"/>
<dbReference type="eggNOG" id="COG1181">
    <property type="taxonomic scope" value="Bacteria"/>
</dbReference>
<dbReference type="HOGENOM" id="CLU_039268_0_1_11"/>
<dbReference type="OrthoDB" id="9813261at2"/>
<dbReference type="UniPathway" id="UPA00219"/>
<dbReference type="Proteomes" id="UP000002077">
    <property type="component" value="Chromosome"/>
</dbReference>
<dbReference type="GO" id="GO:0005829">
    <property type="term" value="C:cytosol"/>
    <property type="evidence" value="ECO:0007669"/>
    <property type="project" value="TreeGrafter"/>
</dbReference>
<dbReference type="GO" id="GO:0005524">
    <property type="term" value="F:ATP binding"/>
    <property type="evidence" value="ECO:0007669"/>
    <property type="project" value="UniProtKB-KW"/>
</dbReference>
<dbReference type="GO" id="GO:0008716">
    <property type="term" value="F:D-alanine-D-alanine ligase activity"/>
    <property type="evidence" value="ECO:0007669"/>
    <property type="project" value="UniProtKB-UniRule"/>
</dbReference>
<dbReference type="GO" id="GO:0046872">
    <property type="term" value="F:metal ion binding"/>
    <property type="evidence" value="ECO:0007669"/>
    <property type="project" value="UniProtKB-KW"/>
</dbReference>
<dbReference type="GO" id="GO:0071555">
    <property type="term" value="P:cell wall organization"/>
    <property type="evidence" value="ECO:0007669"/>
    <property type="project" value="UniProtKB-KW"/>
</dbReference>
<dbReference type="GO" id="GO:0009252">
    <property type="term" value="P:peptidoglycan biosynthetic process"/>
    <property type="evidence" value="ECO:0007669"/>
    <property type="project" value="UniProtKB-UniRule"/>
</dbReference>
<dbReference type="GO" id="GO:0008360">
    <property type="term" value="P:regulation of cell shape"/>
    <property type="evidence" value="ECO:0007669"/>
    <property type="project" value="UniProtKB-KW"/>
</dbReference>
<dbReference type="Gene3D" id="3.40.50.20">
    <property type="match status" value="1"/>
</dbReference>
<dbReference type="Gene3D" id="3.30.1490.20">
    <property type="entry name" value="ATP-grasp fold, A domain"/>
    <property type="match status" value="1"/>
</dbReference>
<dbReference type="Gene3D" id="3.30.470.20">
    <property type="entry name" value="ATP-grasp fold, B domain"/>
    <property type="match status" value="1"/>
</dbReference>
<dbReference type="HAMAP" id="MF_00047">
    <property type="entry name" value="Dala_Dala_lig"/>
    <property type="match status" value="1"/>
</dbReference>
<dbReference type="InterPro" id="IPR011761">
    <property type="entry name" value="ATP-grasp"/>
</dbReference>
<dbReference type="InterPro" id="IPR013815">
    <property type="entry name" value="ATP_grasp_subdomain_1"/>
</dbReference>
<dbReference type="InterPro" id="IPR000291">
    <property type="entry name" value="D-Ala_lig_Van_CS"/>
</dbReference>
<dbReference type="InterPro" id="IPR005905">
    <property type="entry name" value="D_ala_D_ala"/>
</dbReference>
<dbReference type="InterPro" id="IPR011095">
    <property type="entry name" value="Dala_Dala_lig_C"/>
</dbReference>
<dbReference type="InterPro" id="IPR011127">
    <property type="entry name" value="Dala_Dala_lig_N"/>
</dbReference>
<dbReference type="InterPro" id="IPR016185">
    <property type="entry name" value="PreATP-grasp_dom_sf"/>
</dbReference>
<dbReference type="NCBIfam" id="TIGR01205">
    <property type="entry name" value="D_ala_D_alaTIGR"/>
    <property type="match status" value="1"/>
</dbReference>
<dbReference type="NCBIfam" id="NF002528">
    <property type="entry name" value="PRK01966.1-4"/>
    <property type="match status" value="1"/>
</dbReference>
<dbReference type="PANTHER" id="PTHR23132">
    <property type="entry name" value="D-ALANINE--D-ALANINE LIGASE"/>
    <property type="match status" value="1"/>
</dbReference>
<dbReference type="PANTHER" id="PTHR23132:SF25">
    <property type="entry name" value="D-ALANINE--D-ALANINE LIGASE A"/>
    <property type="match status" value="1"/>
</dbReference>
<dbReference type="Pfam" id="PF07478">
    <property type="entry name" value="Dala_Dala_lig_C"/>
    <property type="match status" value="1"/>
</dbReference>
<dbReference type="Pfam" id="PF01820">
    <property type="entry name" value="Dala_Dala_lig_N"/>
    <property type="match status" value="1"/>
</dbReference>
<dbReference type="PIRSF" id="PIRSF039102">
    <property type="entry name" value="Ddl/VanB"/>
    <property type="match status" value="1"/>
</dbReference>
<dbReference type="SUPFAM" id="SSF56059">
    <property type="entry name" value="Glutathione synthetase ATP-binding domain-like"/>
    <property type="match status" value="1"/>
</dbReference>
<dbReference type="SUPFAM" id="SSF52440">
    <property type="entry name" value="PreATP-grasp domain"/>
    <property type="match status" value="1"/>
</dbReference>
<dbReference type="PROSITE" id="PS50975">
    <property type="entry name" value="ATP_GRASP"/>
    <property type="match status" value="1"/>
</dbReference>
<dbReference type="PROSITE" id="PS00843">
    <property type="entry name" value="DALA_DALA_LIGASE_1"/>
    <property type="match status" value="1"/>
</dbReference>
<dbReference type="PROSITE" id="PS00844">
    <property type="entry name" value="DALA_DALA_LIGASE_2"/>
    <property type="match status" value="1"/>
</dbReference>
<proteinExistence type="inferred from homology"/>
<comment type="function">
    <text evidence="2">Cell wall formation.</text>
</comment>
<comment type="catalytic activity">
    <reaction evidence="2">
        <text>2 D-alanine + ATP = D-alanyl-D-alanine + ADP + phosphate + H(+)</text>
        <dbReference type="Rhea" id="RHEA:11224"/>
        <dbReference type="ChEBI" id="CHEBI:15378"/>
        <dbReference type="ChEBI" id="CHEBI:30616"/>
        <dbReference type="ChEBI" id="CHEBI:43474"/>
        <dbReference type="ChEBI" id="CHEBI:57416"/>
        <dbReference type="ChEBI" id="CHEBI:57822"/>
        <dbReference type="ChEBI" id="CHEBI:456216"/>
        <dbReference type="EC" id="6.3.2.4"/>
    </reaction>
</comment>
<comment type="cofactor">
    <cofactor evidence="1">
        <name>Mg(2+)</name>
        <dbReference type="ChEBI" id="CHEBI:18420"/>
    </cofactor>
    <cofactor evidence="1">
        <name>Mn(2+)</name>
        <dbReference type="ChEBI" id="CHEBI:29035"/>
    </cofactor>
    <text evidence="1">Binds 2 magnesium or manganese ions per subunit.</text>
</comment>
<comment type="pathway">
    <text evidence="2">Cell wall biogenesis; peptidoglycan biosynthesis.</text>
</comment>
<comment type="subcellular location">
    <subcellularLocation>
        <location evidence="2">Cytoplasm</location>
    </subcellularLocation>
</comment>
<comment type="similarity">
    <text evidence="2">Belongs to the D-alanine--D-alanine ligase family.</text>
</comment>
<accession>C3PFZ9</accession>
<evidence type="ECO:0000250" key="1"/>
<evidence type="ECO:0000255" key="2">
    <source>
        <dbReference type="HAMAP-Rule" id="MF_00047"/>
    </source>
</evidence>